<protein>
    <recommendedName>
        <fullName>GTP-binding protein 10</fullName>
    </recommendedName>
</protein>
<comment type="function">
    <text evidence="1">May be involved in the ribosome maturation process.</text>
</comment>
<comment type="subcellular location">
    <subcellularLocation>
        <location>Nucleus</location>
        <location>Nucleolus</location>
    </subcellularLocation>
    <text evidence="1">Found in the dense fibrillar compartment region of the nucleolus.</text>
</comment>
<comment type="similarity">
    <text evidence="2">Belongs to the TRAFAC class OBG-HflX-like GTPase superfamily. OBG GTPase family.</text>
</comment>
<name>GTPBA_DANRE</name>
<organism>
    <name type="scientific">Danio rerio</name>
    <name type="common">Zebrafish</name>
    <name type="synonym">Brachydanio rerio</name>
    <dbReference type="NCBI Taxonomy" id="7955"/>
    <lineage>
        <taxon>Eukaryota</taxon>
        <taxon>Metazoa</taxon>
        <taxon>Chordata</taxon>
        <taxon>Craniata</taxon>
        <taxon>Vertebrata</taxon>
        <taxon>Euteleostomi</taxon>
        <taxon>Actinopterygii</taxon>
        <taxon>Neopterygii</taxon>
        <taxon>Teleostei</taxon>
        <taxon>Ostariophysi</taxon>
        <taxon>Cypriniformes</taxon>
        <taxon>Danionidae</taxon>
        <taxon>Danioninae</taxon>
        <taxon>Danio</taxon>
    </lineage>
</organism>
<gene>
    <name type="primary">gtpbp10</name>
    <name type="ORF">zgc:92334</name>
</gene>
<proteinExistence type="evidence at transcript level"/>
<dbReference type="EMBL" id="BC076017">
    <property type="protein sequence ID" value="AAH76017.1"/>
    <property type="molecule type" value="mRNA"/>
</dbReference>
<dbReference type="RefSeq" id="NP_001002454.1">
    <property type="nucleotide sequence ID" value="NM_001002454.1"/>
</dbReference>
<dbReference type="SMR" id="Q6DHF7"/>
<dbReference type="FunCoup" id="Q6DHF7">
    <property type="interactions" value="799"/>
</dbReference>
<dbReference type="STRING" id="7955.ENSDARP00000058969"/>
<dbReference type="PaxDb" id="7955-ENSDARP00000109111"/>
<dbReference type="Ensembl" id="ENSDART00000058970">
    <property type="protein sequence ID" value="ENSDARP00000058969"/>
    <property type="gene ID" value="ENSDARG00000040300"/>
</dbReference>
<dbReference type="GeneID" id="436727"/>
<dbReference type="KEGG" id="dre:436727"/>
<dbReference type="AGR" id="ZFIN:ZDB-GENE-040718-153"/>
<dbReference type="CTD" id="85865"/>
<dbReference type="ZFIN" id="ZDB-GENE-040718-153">
    <property type="gene designation" value="gtpbp10"/>
</dbReference>
<dbReference type="eggNOG" id="KOG1489">
    <property type="taxonomic scope" value="Eukaryota"/>
</dbReference>
<dbReference type="HOGENOM" id="CLU_011747_2_3_1"/>
<dbReference type="InParanoid" id="Q6DHF7"/>
<dbReference type="OMA" id="VFMVDIF"/>
<dbReference type="OrthoDB" id="347018at2759"/>
<dbReference type="PhylomeDB" id="Q6DHF7"/>
<dbReference type="TreeFam" id="TF314774"/>
<dbReference type="PRO" id="PR:Q6DHF7"/>
<dbReference type="Proteomes" id="UP000000437">
    <property type="component" value="Chromosome 16"/>
</dbReference>
<dbReference type="Bgee" id="ENSDARG00000040300">
    <property type="expression patterns" value="Expressed in liver and 21 other cell types or tissues"/>
</dbReference>
<dbReference type="GO" id="GO:0005739">
    <property type="term" value="C:mitochondrion"/>
    <property type="evidence" value="ECO:0000318"/>
    <property type="project" value="GO_Central"/>
</dbReference>
<dbReference type="GO" id="GO:0005730">
    <property type="term" value="C:nucleolus"/>
    <property type="evidence" value="ECO:0007669"/>
    <property type="project" value="UniProtKB-SubCell"/>
</dbReference>
<dbReference type="GO" id="GO:0005525">
    <property type="term" value="F:GTP binding"/>
    <property type="evidence" value="ECO:0000318"/>
    <property type="project" value="GO_Central"/>
</dbReference>
<dbReference type="GO" id="GO:0003924">
    <property type="term" value="F:GTPase activity"/>
    <property type="evidence" value="ECO:0000318"/>
    <property type="project" value="GO_Central"/>
</dbReference>
<dbReference type="GO" id="GO:0000287">
    <property type="term" value="F:magnesium ion binding"/>
    <property type="evidence" value="ECO:0007669"/>
    <property type="project" value="InterPro"/>
</dbReference>
<dbReference type="GO" id="GO:0042254">
    <property type="term" value="P:ribosome biogenesis"/>
    <property type="evidence" value="ECO:0007669"/>
    <property type="project" value="UniProtKB-KW"/>
</dbReference>
<dbReference type="CDD" id="cd01898">
    <property type="entry name" value="Obg"/>
    <property type="match status" value="1"/>
</dbReference>
<dbReference type="FunFam" id="3.40.50.300:FF:001339">
    <property type="entry name" value="Mitochondrial ribosome-associated GTPase 2"/>
    <property type="match status" value="1"/>
</dbReference>
<dbReference type="Gene3D" id="2.70.210.12">
    <property type="entry name" value="GTP1/OBG domain"/>
    <property type="match status" value="1"/>
</dbReference>
<dbReference type="Gene3D" id="3.40.50.300">
    <property type="entry name" value="P-loop containing nucleotide triphosphate hydrolases"/>
    <property type="match status" value="1"/>
</dbReference>
<dbReference type="InterPro" id="IPR031167">
    <property type="entry name" value="G_OBG"/>
</dbReference>
<dbReference type="InterPro" id="IPR006073">
    <property type="entry name" value="GTP-bd"/>
</dbReference>
<dbReference type="InterPro" id="IPR014100">
    <property type="entry name" value="GTP-bd_Obg/CgtA"/>
</dbReference>
<dbReference type="InterPro" id="IPR006169">
    <property type="entry name" value="GTP1_OBG_dom"/>
</dbReference>
<dbReference type="InterPro" id="IPR036726">
    <property type="entry name" value="GTP1_OBG_dom_sf"/>
</dbReference>
<dbReference type="InterPro" id="IPR045086">
    <property type="entry name" value="OBG_GTPase"/>
</dbReference>
<dbReference type="InterPro" id="IPR027417">
    <property type="entry name" value="P-loop_NTPase"/>
</dbReference>
<dbReference type="PANTHER" id="PTHR11702">
    <property type="entry name" value="DEVELOPMENTALLY REGULATED GTP-BINDING PROTEIN-RELATED"/>
    <property type="match status" value="1"/>
</dbReference>
<dbReference type="PANTHER" id="PTHR11702:SF43">
    <property type="entry name" value="GTP-BINDING PROTEIN 10"/>
    <property type="match status" value="1"/>
</dbReference>
<dbReference type="Pfam" id="PF01018">
    <property type="entry name" value="GTP1_OBG"/>
    <property type="match status" value="1"/>
</dbReference>
<dbReference type="Pfam" id="PF01926">
    <property type="entry name" value="MMR_HSR1"/>
    <property type="match status" value="1"/>
</dbReference>
<dbReference type="PIRSF" id="PIRSF002401">
    <property type="entry name" value="GTP_bd_Obg/CgtA"/>
    <property type="match status" value="1"/>
</dbReference>
<dbReference type="PRINTS" id="PR00326">
    <property type="entry name" value="GTP1OBG"/>
</dbReference>
<dbReference type="SUPFAM" id="SSF82051">
    <property type="entry name" value="Obg GTP-binding protein N-terminal domain"/>
    <property type="match status" value="1"/>
</dbReference>
<dbReference type="SUPFAM" id="SSF52540">
    <property type="entry name" value="P-loop containing nucleoside triphosphate hydrolases"/>
    <property type="match status" value="1"/>
</dbReference>
<dbReference type="PROSITE" id="PS51710">
    <property type="entry name" value="G_OBG"/>
    <property type="match status" value="1"/>
</dbReference>
<dbReference type="PROSITE" id="PS51883">
    <property type="entry name" value="OBG"/>
    <property type="match status" value="1"/>
</dbReference>
<reference key="1">
    <citation type="submission" date="2004-07" db="EMBL/GenBank/DDBJ databases">
        <authorList>
            <consortium name="NIH - Zebrafish Gene Collection (ZGC) project"/>
        </authorList>
    </citation>
    <scope>NUCLEOTIDE SEQUENCE [LARGE SCALE MRNA]</scope>
</reference>
<feature type="chain" id="PRO_0000312632" description="GTP-binding protein 10">
    <location>
        <begin position="1"/>
        <end position="380"/>
    </location>
</feature>
<feature type="domain" description="Obg" evidence="3">
    <location>
        <begin position="13"/>
        <end position="148"/>
    </location>
</feature>
<feature type="domain" description="OBG-type G" evidence="2">
    <location>
        <begin position="149"/>
        <end position="344"/>
    </location>
</feature>
<feature type="binding site" evidence="2">
    <location>
        <begin position="155"/>
        <end position="162"/>
    </location>
    <ligand>
        <name>GTP</name>
        <dbReference type="ChEBI" id="CHEBI:37565"/>
    </ligand>
</feature>
<feature type="binding site" evidence="2">
    <location>
        <begin position="202"/>
        <end position="206"/>
    </location>
    <ligand>
        <name>GTP</name>
        <dbReference type="ChEBI" id="CHEBI:37565"/>
    </ligand>
</feature>
<feature type="binding site" evidence="2">
    <location>
        <begin position="278"/>
        <end position="281"/>
    </location>
    <ligand>
        <name>GTP</name>
        <dbReference type="ChEBI" id="CHEBI:37565"/>
    </ligand>
</feature>
<evidence type="ECO:0000250" key="1"/>
<evidence type="ECO:0000255" key="2">
    <source>
        <dbReference type="PROSITE-ProRule" id="PRU01047"/>
    </source>
</evidence>
<evidence type="ECO:0000255" key="3">
    <source>
        <dbReference type="PROSITE-ProRule" id="PRU01231"/>
    </source>
</evidence>
<keyword id="KW-0342">GTP-binding</keyword>
<keyword id="KW-0547">Nucleotide-binding</keyword>
<keyword id="KW-0539">Nucleus</keyword>
<keyword id="KW-1185">Reference proteome</keyword>
<keyword id="KW-0690">Ribosome biogenesis</keyword>
<accession>Q6DHF7</accession>
<sequence length="380" mass="41757">MVWTSRICFRKYGNFVDNVRLYVRGGTGGMGLPRLGGHGGDGGDVWVVAKKDTRLKQIKDKHPDKRFIAGVGSNSSIQALRGAKGEDVEVFAPTGISVTSDHGRMLGELNREGDKLLVAKGGRGGSPQSGFLPNKGQTRNIRLDLKLIADFGLVGFPNAGKSSLLTALSHAKPKIANYPFTTIKPEIGKVMYDDHKQVSVADLPGLIEGAHVNKGMGHKFLKHVERTKQLMFVVDVCGFQLASKTPFRSAFETVLLLSKELELYKEELLSKPAILVINKMDLPEAQSHFQELEAQLENQGESIHLFSEDVIPKSLMHFTHIVPVSAMTGHGLPLLKSLIRQSLEEQDTIDTEAQRSQKILELRREIPSSSIPSWGLPQPT</sequence>